<comment type="function">
    <text evidence="1">Involved in the glycolate utilization. Catalyzes the condensation and subsequent hydrolysis of acetyl-coenzyme A (acetyl-CoA) and glyoxylate to form malate and CoA.</text>
</comment>
<comment type="catalytic activity">
    <reaction evidence="1">
        <text>glyoxylate + acetyl-CoA + H2O = (S)-malate + CoA + H(+)</text>
        <dbReference type="Rhea" id="RHEA:18181"/>
        <dbReference type="ChEBI" id="CHEBI:15377"/>
        <dbReference type="ChEBI" id="CHEBI:15378"/>
        <dbReference type="ChEBI" id="CHEBI:15589"/>
        <dbReference type="ChEBI" id="CHEBI:36655"/>
        <dbReference type="ChEBI" id="CHEBI:57287"/>
        <dbReference type="ChEBI" id="CHEBI:57288"/>
        <dbReference type="EC" id="2.3.3.9"/>
    </reaction>
</comment>
<comment type="cofactor">
    <cofactor evidence="1">
        <name>Mg(2+)</name>
        <dbReference type="ChEBI" id="CHEBI:18420"/>
    </cofactor>
</comment>
<comment type="pathway">
    <text evidence="1">Carbohydrate metabolism; glyoxylate cycle; (S)-malate from isocitrate: step 2/2.</text>
</comment>
<comment type="subunit">
    <text evidence="1">Monomer.</text>
</comment>
<comment type="subcellular location">
    <subcellularLocation>
        <location evidence="1">Cytoplasm</location>
    </subcellularLocation>
</comment>
<comment type="similarity">
    <text evidence="1">Belongs to the malate synthase family. GlcB subfamily.</text>
</comment>
<reference key="1">
    <citation type="journal article" date="2000" name="Nature">
        <title>Complete genome sequence of Pseudomonas aeruginosa PAO1, an opportunistic pathogen.</title>
        <authorList>
            <person name="Stover C.K."/>
            <person name="Pham X.-Q.T."/>
            <person name="Erwin A.L."/>
            <person name="Mizoguchi S.D."/>
            <person name="Warrener P."/>
            <person name="Hickey M.J."/>
            <person name="Brinkman F.S.L."/>
            <person name="Hufnagle W.O."/>
            <person name="Kowalik D.J."/>
            <person name="Lagrou M."/>
            <person name="Garber R.L."/>
            <person name="Goltry L."/>
            <person name="Tolentino E."/>
            <person name="Westbrock-Wadman S."/>
            <person name="Yuan Y."/>
            <person name="Brody L.L."/>
            <person name="Coulter S.N."/>
            <person name="Folger K.R."/>
            <person name="Kas A."/>
            <person name="Larbig K."/>
            <person name="Lim R.M."/>
            <person name="Smith K.A."/>
            <person name="Spencer D.H."/>
            <person name="Wong G.K.-S."/>
            <person name="Wu Z."/>
            <person name="Paulsen I.T."/>
            <person name="Reizer J."/>
            <person name="Saier M.H. Jr."/>
            <person name="Hancock R.E.W."/>
            <person name="Lory S."/>
            <person name="Olson M.V."/>
        </authorList>
    </citation>
    <scope>NUCLEOTIDE SEQUENCE [LARGE SCALE GENOMIC DNA]</scope>
    <source>
        <strain>ATCC 15692 / DSM 22644 / CIP 104116 / JCM 14847 / LMG 12228 / 1C / PRS 101 / PAO1</strain>
    </source>
</reference>
<accession>Q9I636</accession>
<sequence>MTERVQVGGLQVAKVLFDFVNNEAIPGTGVSADTFWTGAEAVINDLAPKNKALLAKRDELQAKIDGWHQARAGQAHDAVAYKAFLEEIGYLLPEAEDFQAGTQNVDDEIARMAGPQLVVPVMNARFALNASNARWGSLYDALYGTDVISEEGGAEKGKGYNKVRGDKVIAFARAFLDEAAPLESGSHVDATSYSVKNGALVVALKNGSETGLKNAGQFLAFQGDAAKPQAVLLKHNGLHFEIQIDPSSPVGQTDAAGVKDVLMEAALTTIMDCEDSVAAVDADDKVVIYRNWLGLMKGDLAEEVSKGGSTFTRTMNPDRVYTRADGSELTLHGRSLLFVRNVGHLMTNDAILDKDGNEVPEGIQDGLFTSLIAIHDLNGNTSRKNSRTGSVYIVKPKMHGPEEAAFTNELFGRVEDVLGLPRNTLKVGIMDEERRTTVNLKACIKAAKDRVVFINTGFLDRTGDEIHTSMEAGAVVRKGAMKSEKWIGAYENNNVDVGLATGLQGKAQIGKGMWAMPDLMAAMLEQKIGHPLAGANTAWVPSPTAATLHALHYHKVDVFARQAELAKRTPASVDDILTIPLAPNTNWTAEEIKNEVDNNAQGILGYVVRWIDQGVGCSKVPDINDVGLMEDRATLRISSQLLANWLRHGVISQEQVVESLKRMAVVVDRQNASDPSYRPMAPNFDDNVAFQAALELVVEGTRQPNGYTEPVLHRRRREFKAKNGL</sequence>
<protein>
    <recommendedName>
        <fullName evidence="1">Malate synthase G</fullName>
        <ecNumber evidence="1">2.3.3.9</ecNumber>
    </recommendedName>
</protein>
<dbReference type="EC" id="2.3.3.9" evidence="1"/>
<dbReference type="EMBL" id="AE004091">
    <property type="protein sequence ID" value="AAG03871.1"/>
    <property type="molecule type" value="Genomic_DNA"/>
</dbReference>
<dbReference type="PIR" id="H83586">
    <property type="entry name" value="H83586"/>
</dbReference>
<dbReference type="RefSeq" id="NP_249173.1">
    <property type="nucleotide sequence ID" value="NC_002516.2"/>
</dbReference>
<dbReference type="RefSeq" id="WP_003113258.1">
    <property type="nucleotide sequence ID" value="NZ_QZGE01000010.1"/>
</dbReference>
<dbReference type="PDB" id="5OAS">
    <property type="method" value="X-ray"/>
    <property type="resolution" value="1.62 A"/>
    <property type="chains" value="A=1-725"/>
</dbReference>
<dbReference type="PDB" id="5VFB">
    <property type="method" value="X-ray"/>
    <property type="resolution" value="1.36 A"/>
    <property type="chains" value="A/B=1-725"/>
</dbReference>
<dbReference type="PDBsum" id="5OAS"/>
<dbReference type="PDBsum" id="5VFB"/>
<dbReference type="SMR" id="Q9I636"/>
<dbReference type="FunCoup" id="Q9I636">
    <property type="interactions" value="181"/>
</dbReference>
<dbReference type="STRING" id="208964.PA0482"/>
<dbReference type="PaxDb" id="208964-PA0482"/>
<dbReference type="GeneID" id="879477"/>
<dbReference type="KEGG" id="pae:PA0482"/>
<dbReference type="PATRIC" id="fig|208964.12.peg.509"/>
<dbReference type="PseudoCAP" id="PA0482"/>
<dbReference type="HOGENOM" id="CLU_028446_1_0_6"/>
<dbReference type="InParanoid" id="Q9I636"/>
<dbReference type="OrthoDB" id="9762054at2"/>
<dbReference type="PhylomeDB" id="Q9I636"/>
<dbReference type="BioCyc" id="PAER208964:G1FZ6-487-MONOMER"/>
<dbReference type="UniPathway" id="UPA00703">
    <property type="reaction ID" value="UER00720"/>
</dbReference>
<dbReference type="Proteomes" id="UP000002438">
    <property type="component" value="Chromosome"/>
</dbReference>
<dbReference type="GO" id="GO:0005829">
    <property type="term" value="C:cytosol"/>
    <property type="evidence" value="ECO:0000318"/>
    <property type="project" value="GO_Central"/>
</dbReference>
<dbReference type="GO" id="GO:0000287">
    <property type="term" value="F:magnesium ion binding"/>
    <property type="evidence" value="ECO:0000318"/>
    <property type="project" value="GO_Central"/>
</dbReference>
<dbReference type="GO" id="GO:0004474">
    <property type="term" value="F:malate synthase activity"/>
    <property type="evidence" value="ECO:0000318"/>
    <property type="project" value="GO_Central"/>
</dbReference>
<dbReference type="GO" id="GO:0009436">
    <property type="term" value="P:glyoxylate catabolic process"/>
    <property type="evidence" value="ECO:0000318"/>
    <property type="project" value="GO_Central"/>
</dbReference>
<dbReference type="GO" id="GO:0006097">
    <property type="term" value="P:glyoxylate cycle"/>
    <property type="evidence" value="ECO:0007669"/>
    <property type="project" value="UniProtKB-UniRule"/>
</dbReference>
<dbReference type="GO" id="GO:0006099">
    <property type="term" value="P:tricarboxylic acid cycle"/>
    <property type="evidence" value="ECO:0007669"/>
    <property type="project" value="UniProtKB-KW"/>
</dbReference>
<dbReference type="CDD" id="cd00728">
    <property type="entry name" value="malate_synt_G"/>
    <property type="match status" value="1"/>
</dbReference>
<dbReference type="FunFam" id="3.20.20.360:FF:000002">
    <property type="entry name" value="Malate synthase G"/>
    <property type="match status" value="1"/>
</dbReference>
<dbReference type="Gene3D" id="3.20.20.360">
    <property type="entry name" value="Malate synthase, domain 3"/>
    <property type="match status" value="2"/>
</dbReference>
<dbReference type="Gene3D" id="1.20.1220.12">
    <property type="entry name" value="Malate synthase, domain III"/>
    <property type="match status" value="1"/>
</dbReference>
<dbReference type="HAMAP" id="MF_00641">
    <property type="entry name" value="Malate_synth_G"/>
    <property type="match status" value="1"/>
</dbReference>
<dbReference type="InterPro" id="IPR044856">
    <property type="entry name" value="Malate_synth_C_sf"/>
</dbReference>
<dbReference type="InterPro" id="IPR011076">
    <property type="entry name" value="Malate_synth_sf"/>
</dbReference>
<dbReference type="InterPro" id="IPR001465">
    <property type="entry name" value="Malate_synthase_TIM"/>
</dbReference>
<dbReference type="InterPro" id="IPR006253">
    <property type="entry name" value="Malate_synthG"/>
</dbReference>
<dbReference type="InterPro" id="IPR048355">
    <property type="entry name" value="MS_C"/>
</dbReference>
<dbReference type="InterPro" id="IPR048356">
    <property type="entry name" value="MS_N"/>
</dbReference>
<dbReference type="InterPro" id="IPR046363">
    <property type="entry name" value="MS_N_TIM-barrel_dom"/>
</dbReference>
<dbReference type="InterPro" id="IPR048357">
    <property type="entry name" value="MSG_insertion"/>
</dbReference>
<dbReference type="NCBIfam" id="TIGR01345">
    <property type="entry name" value="malate_syn_G"/>
    <property type="match status" value="1"/>
</dbReference>
<dbReference type="NCBIfam" id="NF002825">
    <property type="entry name" value="PRK02999.1"/>
    <property type="match status" value="1"/>
</dbReference>
<dbReference type="PANTHER" id="PTHR42739">
    <property type="entry name" value="MALATE SYNTHASE G"/>
    <property type="match status" value="1"/>
</dbReference>
<dbReference type="PANTHER" id="PTHR42739:SF1">
    <property type="entry name" value="MALATE SYNTHASE G"/>
    <property type="match status" value="1"/>
</dbReference>
<dbReference type="Pfam" id="PF20659">
    <property type="entry name" value="MS_C"/>
    <property type="match status" value="1"/>
</dbReference>
<dbReference type="Pfam" id="PF20656">
    <property type="entry name" value="MS_N"/>
    <property type="match status" value="1"/>
</dbReference>
<dbReference type="Pfam" id="PF01274">
    <property type="entry name" value="MS_TIM-barrel"/>
    <property type="match status" value="1"/>
</dbReference>
<dbReference type="Pfam" id="PF20658">
    <property type="entry name" value="MSG_insertion"/>
    <property type="match status" value="1"/>
</dbReference>
<dbReference type="SUPFAM" id="SSF51645">
    <property type="entry name" value="Malate synthase G"/>
    <property type="match status" value="1"/>
</dbReference>
<name>MASZ_PSEAE</name>
<gene>
    <name evidence="1" type="primary">glcB</name>
    <name type="ordered locus">PA0482</name>
</gene>
<feature type="chain" id="PRO_0000166891" description="Malate synthase G">
    <location>
        <begin position="1"/>
        <end position="725"/>
    </location>
</feature>
<feature type="active site" description="Proton acceptor" evidence="1">
    <location>
        <position position="340"/>
    </location>
</feature>
<feature type="active site" description="Proton donor" evidence="1">
    <location>
        <position position="631"/>
    </location>
</feature>
<feature type="binding site" evidence="1">
    <location>
        <position position="118"/>
    </location>
    <ligand>
        <name>acetyl-CoA</name>
        <dbReference type="ChEBI" id="CHEBI:57288"/>
    </ligand>
</feature>
<feature type="binding site" evidence="1">
    <location>
        <begin position="125"/>
        <end position="126"/>
    </location>
    <ligand>
        <name>acetyl-CoA</name>
        <dbReference type="ChEBI" id="CHEBI:57288"/>
    </ligand>
</feature>
<feature type="binding site" evidence="1">
    <location>
        <position position="276"/>
    </location>
    <ligand>
        <name>acetyl-CoA</name>
        <dbReference type="ChEBI" id="CHEBI:57288"/>
    </ligand>
</feature>
<feature type="binding site" evidence="1">
    <location>
        <position position="313"/>
    </location>
    <ligand>
        <name>acetyl-CoA</name>
        <dbReference type="ChEBI" id="CHEBI:57288"/>
    </ligand>
</feature>
<feature type="binding site" evidence="1">
    <location>
        <position position="340"/>
    </location>
    <ligand>
        <name>glyoxylate</name>
        <dbReference type="ChEBI" id="CHEBI:36655"/>
    </ligand>
</feature>
<feature type="binding site" evidence="1">
    <location>
        <position position="432"/>
    </location>
    <ligand>
        <name>glyoxylate</name>
        <dbReference type="ChEBI" id="CHEBI:36655"/>
    </ligand>
</feature>
<feature type="binding site" evidence="1">
    <location>
        <position position="432"/>
    </location>
    <ligand>
        <name>Mg(2+)</name>
        <dbReference type="ChEBI" id="CHEBI:18420"/>
    </ligand>
</feature>
<feature type="binding site" evidence="1">
    <location>
        <begin position="457"/>
        <end position="460"/>
    </location>
    <ligand>
        <name>glyoxylate</name>
        <dbReference type="ChEBI" id="CHEBI:36655"/>
    </ligand>
</feature>
<feature type="binding site" evidence="1">
    <location>
        <position position="460"/>
    </location>
    <ligand>
        <name>Mg(2+)</name>
        <dbReference type="ChEBI" id="CHEBI:18420"/>
    </ligand>
</feature>
<feature type="binding site" evidence="1">
    <location>
        <position position="541"/>
    </location>
    <ligand>
        <name>acetyl-CoA</name>
        <dbReference type="ChEBI" id="CHEBI:57288"/>
    </ligand>
</feature>
<feature type="modified residue" description="Cysteine sulfenic acid (-SOH)" evidence="1">
    <location>
        <position position="617"/>
    </location>
</feature>
<feature type="strand" evidence="2">
    <location>
        <begin position="4"/>
        <end position="7"/>
    </location>
</feature>
<feature type="strand" evidence="2">
    <location>
        <begin position="10"/>
        <end position="13"/>
    </location>
</feature>
<feature type="helix" evidence="2">
    <location>
        <begin position="14"/>
        <end position="22"/>
    </location>
</feature>
<feature type="helix" evidence="2">
    <location>
        <begin position="32"/>
        <end position="69"/>
    </location>
</feature>
<feature type="turn" evidence="2">
    <location>
        <begin position="70"/>
        <end position="73"/>
    </location>
</feature>
<feature type="helix" evidence="2">
    <location>
        <begin position="78"/>
        <end position="87"/>
    </location>
</feature>
<feature type="helix" evidence="2">
    <location>
        <begin position="107"/>
        <end position="110"/>
    </location>
</feature>
<feature type="strand" evidence="2">
    <location>
        <begin position="116"/>
        <end position="120"/>
    </location>
</feature>
<feature type="helix" evidence="2">
    <location>
        <begin position="124"/>
        <end position="132"/>
    </location>
</feature>
<feature type="strand" evidence="2">
    <location>
        <begin position="135"/>
        <end position="137"/>
    </location>
</feature>
<feature type="helix" evidence="2">
    <location>
        <begin position="138"/>
        <end position="143"/>
    </location>
</feature>
<feature type="turn" evidence="2">
    <location>
        <begin position="151"/>
        <end position="153"/>
    </location>
</feature>
<feature type="helix" evidence="2">
    <location>
        <begin position="162"/>
        <end position="179"/>
    </location>
</feature>
<feature type="strand" evidence="2">
    <location>
        <begin position="182"/>
        <end position="185"/>
    </location>
</feature>
<feature type="helix" evidence="2">
    <location>
        <begin position="187"/>
        <end position="189"/>
    </location>
</feature>
<feature type="strand" evidence="2">
    <location>
        <begin position="190"/>
        <end position="196"/>
    </location>
</feature>
<feature type="strand" evidence="2">
    <location>
        <begin position="199"/>
        <end position="204"/>
    </location>
</feature>
<feature type="strand" evidence="2">
    <location>
        <begin position="212"/>
        <end position="214"/>
    </location>
</feature>
<feature type="helix" evidence="2">
    <location>
        <begin position="215"/>
        <end position="217"/>
    </location>
</feature>
<feature type="strand" evidence="2">
    <location>
        <begin position="218"/>
        <end position="223"/>
    </location>
</feature>
<feature type="strand" evidence="2">
    <location>
        <begin position="229"/>
        <end position="235"/>
    </location>
</feature>
<feature type="strand" evidence="2">
    <location>
        <begin position="238"/>
        <end position="244"/>
    </location>
</feature>
<feature type="helix" evidence="2">
    <location>
        <begin position="251"/>
        <end position="253"/>
    </location>
</feature>
<feature type="strand" evidence="2">
    <location>
        <begin position="258"/>
        <end position="264"/>
    </location>
</feature>
<feature type="strand" evidence="2">
    <location>
        <begin position="267"/>
        <end position="274"/>
    </location>
</feature>
<feature type="helix" evidence="2">
    <location>
        <begin position="282"/>
        <end position="296"/>
    </location>
</feature>
<feature type="strand" evidence="2">
    <location>
        <begin position="301"/>
        <end position="306"/>
    </location>
</feature>
<feature type="strand" evidence="2">
    <location>
        <begin position="309"/>
        <end position="314"/>
    </location>
</feature>
<feature type="strand" evidence="2">
    <location>
        <begin position="319"/>
        <end position="322"/>
    </location>
</feature>
<feature type="strand" evidence="2">
    <location>
        <begin position="328"/>
        <end position="331"/>
    </location>
</feature>
<feature type="strand" evidence="2">
    <location>
        <begin position="336"/>
        <end position="340"/>
    </location>
</feature>
<feature type="strand" evidence="2">
    <location>
        <begin position="347"/>
        <end position="352"/>
    </location>
</feature>
<feature type="strand" evidence="2">
    <location>
        <begin position="358"/>
        <end position="360"/>
    </location>
</feature>
<feature type="helix" evidence="2">
    <location>
        <begin position="361"/>
        <end position="377"/>
    </location>
</feature>
<feature type="strand" evidence="2">
    <location>
        <begin position="381"/>
        <end position="383"/>
    </location>
</feature>
<feature type="strand" evidence="2">
    <location>
        <begin position="387"/>
        <end position="389"/>
    </location>
</feature>
<feature type="strand" evidence="2">
    <location>
        <begin position="391"/>
        <end position="395"/>
    </location>
</feature>
<feature type="helix" evidence="2">
    <location>
        <begin position="401"/>
        <end position="418"/>
    </location>
</feature>
<feature type="strand" evidence="2">
    <location>
        <begin position="425"/>
        <end position="431"/>
    </location>
</feature>
<feature type="helix" evidence="2">
    <location>
        <begin position="434"/>
        <end position="437"/>
    </location>
</feature>
<feature type="helix" evidence="2">
    <location>
        <begin position="440"/>
        <end position="445"/>
    </location>
</feature>
<feature type="turn" evidence="2">
    <location>
        <begin position="446"/>
        <end position="450"/>
    </location>
</feature>
<feature type="strand" evidence="2">
    <location>
        <begin position="451"/>
        <end position="456"/>
    </location>
</feature>
<feature type="helix" evidence="2">
    <location>
        <begin position="458"/>
        <end position="468"/>
    </location>
</feature>
<feature type="turn" evidence="2">
    <location>
        <begin position="469"/>
        <end position="472"/>
    </location>
</feature>
<feature type="helix" evidence="2">
    <location>
        <begin position="478"/>
        <end position="483"/>
    </location>
</feature>
<feature type="helix" evidence="2">
    <location>
        <begin position="485"/>
        <end position="500"/>
    </location>
</feature>
<feature type="turn" evidence="2">
    <location>
        <begin position="504"/>
        <end position="506"/>
    </location>
</feature>
<feature type="strand" evidence="2">
    <location>
        <begin position="507"/>
        <end position="513"/>
    </location>
</feature>
<feature type="helix" evidence="2">
    <location>
        <begin position="520"/>
        <end position="526"/>
    </location>
</feature>
<feature type="helix" evidence="2">
    <location>
        <begin position="529"/>
        <end position="532"/>
    </location>
</feature>
<feature type="strand" evidence="2">
    <location>
        <begin position="536"/>
        <end position="542"/>
    </location>
</feature>
<feature type="helix" evidence="2">
    <location>
        <begin position="543"/>
        <end position="555"/>
    </location>
</feature>
<feature type="helix" evidence="2">
    <location>
        <begin position="558"/>
        <end position="564"/>
    </location>
</feature>
<feature type="turn" evidence="2">
    <location>
        <begin position="565"/>
        <end position="567"/>
    </location>
</feature>
<feature type="helix" evidence="2">
    <location>
        <begin position="573"/>
        <end position="576"/>
    </location>
</feature>
<feature type="helix" evidence="2">
    <location>
        <begin position="589"/>
        <end position="613"/>
    </location>
</feature>
<feature type="strand" evidence="2">
    <location>
        <begin position="618"/>
        <end position="621"/>
    </location>
</feature>
<feature type="strand" evidence="2">
    <location>
        <begin position="627"/>
        <end position="630"/>
    </location>
</feature>
<feature type="helix" evidence="2">
    <location>
        <begin position="632"/>
        <end position="647"/>
    </location>
</feature>
<feature type="helix" evidence="2">
    <location>
        <begin position="653"/>
        <end position="671"/>
    </location>
</feature>
<feature type="helix" evidence="2">
    <location>
        <begin position="684"/>
        <end position="686"/>
    </location>
</feature>
<feature type="helix" evidence="2">
    <location>
        <begin position="688"/>
        <end position="698"/>
    </location>
</feature>
<feature type="helix" evidence="2">
    <location>
        <begin position="700"/>
        <end position="702"/>
    </location>
</feature>
<feature type="helix" evidence="2">
    <location>
        <begin position="704"/>
        <end position="706"/>
    </location>
</feature>
<feature type="helix" evidence="2">
    <location>
        <begin position="709"/>
        <end position="722"/>
    </location>
</feature>
<organism>
    <name type="scientific">Pseudomonas aeruginosa (strain ATCC 15692 / DSM 22644 / CIP 104116 / JCM 14847 / LMG 12228 / 1C / PRS 101 / PAO1)</name>
    <dbReference type="NCBI Taxonomy" id="208964"/>
    <lineage>
        <taxon>Bacteria</taxon>
        <taxon>Pseudomonadati</taxon>
        <taxon>Pseudomonadota</taxon>
        <taxon>Gammaproteobacteria</taxon>
        <taxon>Pseudomonadales</taxon>
        <taxon>Pseudomonadaceae</taxon>
        <taxon>Pseudomonas</taxon>
    </lineage>
</organism>
<keyword id="KW-0002">3D-structure</keyword>
<keyword id="KW-0963">Cytoplasm</keyword>
<keyword id="KW-0329">Glyoxylate bypass</keyword>
<keyword id="KW-0460">Magnesium</keyword>
<keyword id="KW-0479">Metal-binding</keyword>
<keyword id="KW-0558">Oxidation</keyword>
<keyword id="KW-1185">Reference proteome</keyword>
<keyword id="KW-0808">Transferase</keyword>
<keyword id="KW-0816">Tricarboxylic acid cycle</keyword>
<evidence type="ECO:0000255" key="1">
    <source>
        <dbReference type="HAMAP-Rule" id="MF_00641"/>
    </source>
</evidence>
<evidence type="ECO:0007829" key="2">
    <source>
        <dbReference type="PDB" id="5VFB"/>
    </source>
</evidence>
<proteinExistence type="evidence at protein level"/>